<keyword id="KW-1003">Cell membrane</keyword>
<keyword id="KW-0328">Glycosyltransferase</keyword>
<keyword id="KW-0472">Membrane</keyword>
<keyword id="KW-1185">Reference proteome</keyword>
<keyword id="KW-0808">Transferase</keyword>
<keyword id="KW-0812">Transmembrane</keyword>
<keyword id="KW-1133">Transmembrane helix</keyword>
<name>Y1113_METJA</name>
<protein>
    <recommendedName>
        <fullName>Putative glycosyltransferase MJ1113</fullName>
        <ecNumber>2.-.-.-</ecNumber>
    </recommendedName>
</protein>
<accession>Q58513</accession>
<reference key="1">
    <citation type="journal article" date="1996" name="Science">
        <title>Complete genome sequence of the methanogenic archaeon, Methanococcus jannaschii.</title>
        <authorList>
            <person name="Bult C.J."/>
            <person name="White O."/>
            <person name="Olsen G.J."/>
            <person name="Zhou L."/>
            <person name="Fleischmann R.D."/>
            <person name="Sutton G.G."/>
            <person name="Blake J.A."/>
            <person name="FitzGerald L.M."/>
            <person name="Clayton R.A."/>
            <person name="Gocayne J.D."/>
            <person name="Kerlavage A.R."/>
            <person name="Dougherty B.A."/>
            <person name="Tomb J.-F."/>
            <person name="Adams M.D."/>
            <person name="Reich C.I."/>
            <person name="Overbeek R."/>
            <person name="Kirkness E.F."/>
            <person name="Weinstock K.G."/>
            <person name="Merrick J.M."/>
            <person name="Glodek A."/>
            <person name="Scott J.L."/>
            <person name="Geoghagen N.S.M."/>
            <person name="Weidman J.F."/>
            <person name="Fuhrmann J.L."/>
            <person name="Nguyen D."/>
            <person name="Utterback T.R."/>
            <person name="Kelley J.M."/>
            <person name="Peterson J.D."/>
            <person name="Sadow P.W."/>
            <person name="Hanna M.C."/>
            <person name="Cotton M.D."/>
            <person name="Roberts K.M."/>
            <person name="Hurst M.A."/>
            <person name="Kaine B.P."/>
            <person name="Borodovsky M."/>
            <person name="Klenk H.-P."/>
            <person name="Fraser C.M."/>
            <person name="Smith H.O."/>
            <person name="Woese C.R."/>
            <person name="Venter J.C."/>
        </authorList>
    </citation>
    <scope>NUCLEOTIDE SEQUENCE [LARGE SCALE GENOMIC DNA]</scope>
    <source>
        <strain>ATCC 43067 / DSM 2661 / JAL-1 / JCM 10045 / NBRC 100440</strain>
    </source>
</reference>
<feature type="chain" id="PRO_0000108952" description="Putative glycosyltransferase MJ1113">
    <location>
        <begin position="1"/>
        <end position="301"/>
    </location>
</feature>
<feature type="transmembrane region" description="Helical" evidence="1">
    <location>
        <begin position="2"/>
        <end position="22"/>
    </location>
</feature>
<feature type="transmembrane region" description="Helical" evidence="1">
    <location>
        <begin position="62"/>
        <end position="82"/>
    </location>
</feature>
<feature type="transmembrane region" description="Helical" evidence="1">
    <location>
        <begin position="95"/>
        <end position="115"/>
    </location>
</feature>
<feature type="transmembrane region" description="Helical" evidence="1">
    <location>
        <begin position="117"/>
        <end position="137"/>
    </location>
</feature>
<feature type="transmembrane region" description="Helical" evidence="1">
    <location>
        <begin position="140"/>
        <end position="160"/>
    </location>
</feature>
<feature type="transmembrane region" description="Helical" evidence="1">
    <location>
        <begin position="164"/>
        <end position="184"/>
    </location>
</feature>
<feature type="transmembrane region" description="Helical" evidence="1">
    <location>
        <begin position="191"/>
        <end position="211"/>
    </location>
</feature>
<feature type="transmembrane region" description="Helical" evidence="1">
    <location>
        <begin position="280"/>
        <end position="300"/>
    </location>
</feature>
<proteinExistence type="inferred from homology"/>
<comment type="subcellular location">
    <subcellularLocation>
        <location evidence="2">Cell membrane</location>
        <topology evidence="2">Multi-pass membrane protein</topology>
    </subcellularLocation>
</comment>
<comment type="similarity">
    <text evidence="2">Belongs to the glycosyltransferase 4 family.</text>
</comment>
<gene>
    <name type="ordered locus">MJ1113</name>
</gene>
<evidence type="ECO:0000255" key="1"/>
<evidence type="ECO:0000305" key="2"/>
<organism>
    <name type="scientific">Methanocaldococcus jannaschii (strain ATCC 43067 / DSM 2661 / JAL-1 / JCM 10045 / NBRC 100440)</name>
    <name type="common">Methanococcus jannaschii</name>
    <dbReference type="NCBI Taxonomy" id="243232"/>
    <lineage>
        <taxon>Archaea</taxon>
        <taxon>Methanobacteriati</taxon>
        <taxon>Methanobacteriota</taxon>
        <taxon>Methanomada group</taxon>
        <taxon>Methanococci</taxon>
        <taxon>Methanococcales</taxon>
        <taxon>Methanocaldococcaceae</taxon>
        <taxon>Methanocaldococcus</taxon>
    </lineage>
</organism>
<dbReference type="EC" id="2.-.-.-"/>
<dbReference type="EMBL" id="L77117">
    <property type="protein sequence ID" value="AAB99115.1"/>
    <property type="molecule type" value="Genomic_DNA"/>
</dbReference>
<dbReference type="PIR" id="H64438">
    <property type="entry name" value="H64438"/>
</dbReference>
<dbReference type="RefSeq" id="WP_010870624.1">
    <property type="nucleotide sequence ID" value="NC_000909.1"/>
</dbReference>
<dbReference type="SMR" id="Q58513"/>
<dbReference type="FunCoup" id="Q58513">
    <property type="interactions" value="115"/>
</dbReference>
<dbReference type="STRING" id="243232.MJ_1113"/>
<dbReference type="PaxDb" id="243232-MJ_1113"/>
<dbReference type="EnsemblBacteria" id="AAB99115">
    <property type="protein sequence ID" value="AAB99115"/>
    <property type="gene ID" value="MJ_1113"/>
</dbReference>
<dbReference type="GeneID" id="1452009"/>
<dbReference type="KEGG" id="mja:MJ_1113"/>
<dbReference type="eggNOG" id="arCOG03199">
    <property type="taxonomic scope" value="Archaea"/>
</dbReference>
<dbReference type="HOGENOM" id="CLU_023982_4_0_2"/>
<dbReference type="InParanoid" id="Q58513"/>
<dbReference type="OrthoDB" id="34534at2157"/>
<dbReference type="PhylomeDB" id="Q58513"/>
<dbReference type="Proteomes" id="UP000000805">
    <property type="component" value="Chromosome"/>
</dbReference>
<dbReference type="GO" id="GO:0005886">
    <property type="term" value="C:plasma membrane"/>
    <property type="evidence" value="ECO:0000318"/>
    <property type="project" value="GO_Central"/>
</dbReference>
<dbReference type="GO" id="GO:0016757">
    <property type="term" value="F:glycosyltransferase activity"/>
    <property type="evidence" value="ECO:0007669"/>
    <property type="project" value="UniProtKB-KW"/>
</dbReference>
<dbReference type="GO" id="GO:0016780">
    <property type="term" value="F:phosphotransferase activity, for other substituted phosphate groups"/>
    <property type="evidence" value="ECO:0000318"/>
    <property type="project" value="GO_Central"/>
</dbReference>
<dbReference type="GO" id="GO:0044038">
    <property type="term" value="P:cell wall macromolecule biosynthetic process"/>
    <property type="evidence" value="ECO:0000318"/>
    <property type="project" value="GO_Central"/>
</dbReference>
<dbReference type="GO" id="GO:0071555">
    <property type="term" value="P:cell wall organization"/>
    <property type="evidence" value="ECO:0000318"/>
    <property type="project" value="GO_Central"/>
</dbReference>
<dbReference type="CDD" id="cd06856">
    <property type="entry name" value="GT_GPT_archaea"/>
    <property type="match status" value="1"/>
</dbReference>
<dbReference type="InterPro" id="IPR000715">
    <property type="entry name" value="Glycosyl_transferase_4"/>
</dbReference>
<dbReference type="PANTHER" id="PTHR22926">
    <property type="entry name" value="PHOSPHO-N-ACETYLMURAMOYL-PENTAPEPTIDE-TRANSFERASE"/>
    <property type="match status" value="1"/>
</dbReference>
<dbReference type="PANTHER" id="PTHR22926:SF3">
    <property type="entry name" value="UNDECAPRENYL-PHOSPHATE ALPHA-N-ACETYLGLUCOSAMINYL 1-PHOSPHATE TRANSFERASE"/>
    <property type="match status" value="1"/>
</dbReference>
<dbReference type="Pfam" id="PF00953">
    <property type="entry name" value="Glycos_transf_4"/>
    <property type="match status" value="1"/>
</dbReference>
<sequence>MGHYFINLFTYTIIAFIFSAVLCKFLMKKMINYKFGYDLHKKEKIKVPEMGGLAVLFSNALFIPFVNPIFVLPIITAGIIGIVDDIAKLSPKEKLILLFISGLIIGILFYNNSYVNLIEILIIALGIMISSNLTNMLAGFNGLEIGMGVIASISLALVLFLDNYTTGFLSALIFSASYLGLLIFNKYPAKVFPGDVGTLPIGAFLAVLAVVYKEYIPFLVIMMPYVIDASLKYLSAGVMSRDEHKPTTLKEDGKLYYIGGYLSLPRLILKYKPMREPHLVTVLWIIGIFFGIVGILISLIA</sequence>